<dbReference type="EMBL" id="CP001657">
    <property type="protein sequence ID" value="ACT15265.1"/>
    <property type="molecule type" value="Genomic_DNA"/>
</dbReference>
<dbReference type="RefSeq" id="WP_015842329.1">
    <property type="nucleotide sequence ID" value="NC_012917.1"/>
</dbReference>
<dbReference type="SMR" id="C6DJG6"/>
<dbReference type="STRING" id="561230.PC1_4251"/>
<dbReference type="KEGG" id="pct:PC1_4251"/>
<dbReference type="eggNOG" id="COG0356">
    <property type="taxonomic scope" value="Bacteria"/>
</dbReference>
<dbReference type="HOGENOM" id="CLU_041018_1_0_6"/>
<dbReference type="OrthoDB" id="9789241at2"/>
<dbReference type="Proteomes" id="UP000002736">
    <property type="component" value="Chromosome"/>
</dbReference>
<dbReference type="GO" id="GO:0005886">
    <property type="term" value="C:plasma membrane"/>
    <property type="evidence" value="ECO:0007669"/>
    <property type="project" value="UniProtKB-SubCell"/>
</dbReference>
<dbReference type="GO" id="GO:0045259">
    <property type="term" value="C:proton-transporting ATP synthase complex"/>
    <property type="evidence" value="ECO:0007669"/>
    <property type="project" value="UniProtKB-KW"/>
</dbReference>
<dbReference type="GO" id="GO:0046933">
    <property type="term" value="F:proton-transporting ATP synthase activity, rotational mechanism"/>
    <property type="evidence" value="ECO:0007669"/>
    <property type="project" value="UniProtKB-UniRule"/>
</dbReference>
<dbReference type="GO" id="GO:0042777">
    <property type="term" value="P:proton motive force-driven plasma membrane ATP synthesis"/>
    <property type="evidence" value="ECO:0007669"/>
    <property type="project" value="TreeGrafter"/>
</dbReference>
<dbReference type="CDD" id="cd00310">
    <property type="entry name" value="ATP-synt_Fo_a_6"/>
    <property type="match status" value="1"/>
</dbReference>
<dbReference type="FunFam" id="1.20.120.220:FF:000002">
    <property type="entry name" value="ATP synthase subunit a"/>
    <property type="match status" value="1"/>
</dbReference>
<dbReference type="Gene3D" id="1.20.120.220">
    <property type="entry name" value="ATP synthase, F0 complex, subunit A"/>
    <property type="match status" value="1"/>
</dbReference>
<dbReference type="HAMAP" id="MF_01393">
    <property type="entry name" value="ATP_synth_a_bact"/>
    <property type="match status" value="1"/>
</dbReference>
<dbReference type="InterPro" id="IPR045082">
    <property type="entry name" value="ATP_syn_F0_a_bact/chloroplast"/>
</dbReference>
<dbReference type="InterPro" id="IPR000568">
    <property type="entry name" value="ATP_synth_F0_asu"/>
</dbReference>
<dbReference type="InterPro" id="IPR023011">
    <property type="entry name" value="ATP_synth_F0_asu_AS"/>
</dbReference>
<dbReference type="InterPro" id="IPR035908">
    <property type="entry name" value="F0_ATP_A_sf"/>
</dbReference>
<dbReference type="NCBIfam" id="TIGR01131">
    <property type="entry name" value="ATP_synt_6_or_A"/>
    <property type="match status" value="1"/>
</dbReference>
<dbReference type="NCBIfam" id="NF004477">
    <property type="entry name" value="PRK05815.1-1"/>
    <property type="match status" value="1"/>
</dbReference>
<dbReference type="PANTHER" id="PTHR42823">
    <property type="entry name" value="ATP SYNTHASE SUBUNIT A, CHLOROPLASTIC"/>
    <property type="match status" value="1"/>
</dbReference>
<dbReference type="PANTHER" id="PTHR42823:SF3">
    <property type="entry name" value="ATP SYNTHASE SUBUNIT A, CHLOROPLASTIC"/>
    <property type="match status" value="1"/>
</dbReference>
<dbReference type="Pfam" id="PF00119">
    <property type="entry name" value="ATP-synt_A"/>
    <property type="match status" value="1"/>
</dbReference>
<dbReference type="SUPFAM" id="SSF81336">
    <property type="entry name" value="F1F0 ATP synthase subunit A"/>
    <property type="match status" value="1"/>
</dbReference>
<dbReference type="PROSITE" id="PS00449">
    <property type="entry name" value="ATPASE_A"/>
    <property type="match status" value="1"/>
</dbReference>
<protein>
    <recommendedName>
        <fullName evidence="1">ATP synthase subunit a</fullName>
    </recommendedName>
    <alternativeName>
        <fullName evidence="1">ATP synthase F0 sector subunit a</fullName>
    </alternativeName>
    <alternativeName>
        <fullName evidence="1">F-ATPase subunit 6</fullName>
    </alternativeName>
</protein>
<accession>C6DJG6</accession>
<evidence type="ECO:0000255" key="1">
    <source>
        <dbReference type="HAMAP-Rule" id="MF_01393"/>
    </source>
</evidence>
<organism>
    <name type="scientific">Pectobacterium carotovorum subsp. carotovorum (strain PC1)</name>
    <dbReference type="NCBI Taxonomy" id="561230"/>
    <lineage>
        <taxon>Bacteria</taxon>
        <taxon>Pseudomonadati</taxon>
        <taxon>Pseudomonadota</taxon>
        <taxon>Gammaproteobacteria</taxon>
        <taxon>Enterobacterales</taxon>
        <taxon>Pectobacteriaceae</taxon>
        <taxon>Pectobacterium</taxon>
    </lineage>
</organism>
<comment type="function">
    <text evidence="1">Key component of the proton channel; it plays a direct role in the translocation of protons across the membrane.</text>
</comment>
<comment type="subunit">
    <text evidence="1">F-type ATPases have 2 components, CF(1) - the catalytic core - and CF(0) - the membrane proton channel. CF(1) has five subunits: alpha(3), beta(3), gamma(1), delta(1), epsilon(1). CF(0) has three main subunits: a(1), b(2) and c(9-12). The alpha and beta chains form an alternating ring which encloses part of the gamma chain. CF(1) is attached to CF(0) by a central stalk formed by the gamma and epsilon chains, while a peripheral stalk is formed by the delta and b chains.</text>
</comment>
<comment type="subcellular location">
    <subcellularLocation>
        <location evidence="1">Cell inner membrane</location>
        <topology evidence="1">Multi-pass membrane protein</topology>
    </subcellularLocation>
</comment>
<comment type="similarity">
    <text evidence="1">Belongs to the ATPase A chain family.</text>
</comment>
<gene>
    <name evidence="1" type="primary">atpB</name>
    <name type="ordered locus">PC1_4251</name>
</gene>
<proteinExistence type="inferred from homology"/>
<keyword id="KW-0066">ATP synthesis</keyword>
<keyword id="KW-0997">Cell inner membrane</keyword>
<keyword id="KW-1003">Cell membrane</keyword>
<keyword id="KW-0138">CF(0)</keyword>
<keyword id="KW-0375">Hydrogen ion transport</keyword>
<keyword id="KW-0406">Ion transport</keyword>
<keyword id="KW-0472">Membrane</keyword>
<keyword id="KW-0812">Transmembrane</keyword>
<keyword id="KW-1133">Transmembrane helix</keyword>
<keyword id="KW-0813">Transport</keyword>
<feature type="chain" id="PRO_1000215149" description="ATP synthase subunit a">
    <location>
        <begin position="1"/>
        <end position="266"/>
    </location>
</feature>
<feature type="transmembrane region" description="Helical" evidence="1">
    <location>
        <begin position="28"/>
        <end position="48"/>
    </location>
</feature>
<feature type="transmembrane region" description="Helical" evidence="1">
    <location>
        <begin position="88"/>
        <end position="108"/>
    </location>
</feature>
<feature type="transmembrane region" description="Helical" evidence="1">
    <location>
        <begin position="141"/>
        <end position="161"/>
    </location>
</feature>
<feature type="transmembrane region" description="Helical" evidence="1">
    <location>
        <begin position="206"/>
        <end position="226"/>
    </location>
</feature>
<feature type="transmembrane region" description="Helical" evidence="1">
    <location>
        <begin position="237"/>
        <end position="257"/>
    </location>
</feature>
<name>ATP6_PECCP</name>
<sequence>MAAGEISTPQEYISHHLHHLQVGTGFWSINVDSMFFSIALGILFLVIFHRVAKRATSGVPGKLQTAVELIIGFVDGTVRDMFHGKSKLIAPLALTIFVWVFLMNLMDLLPIDLLPQAWAGIYSLLGYDPAHAYLRAVPTADVNITLSMALGVFILVLFYSIKMKGLGGFVKELTMQPFNHPVFIPINLILEGVSLLSKPISLGLRLFGNMYAGELIFILIAGLLPWWSQWLLNVPWAIFHILIITLQAFIFMVLTVVYLSMASEEH</sequence>
<reference key="1">
    <citation type="submission" date="2009-07" db="EMBL/GenBank/DDBJ databases">
        <title>Complete sequence of Pectobacterium carotovorum subsp. carotovorum PC1.</title>
        <authorList>
            <consortium name="US DOE Joint Genome Institute"/>
            <person name="Lucas S."/>
            <person name="Copeland A."/>
            <person name="Lapidus A."/>
            <person name="Glavina del Rio T."/>
            <person name="Tice H."/>
            <person name="Bruce D."/>
            <person name="Goodwin L."/>
            <person name="Pitluck S."/>
            <person name="Munk A.C."/>
            <person name="Brettin T."/>
            <person name="Detter J.C."/>
            <person name="Han C."/>
            <person name="Tapia R."/>
            <person name="Larimer F."/>
            <person name="Land M."/>
            <person name="Hauser L."/>
            <person name="Kyrpides N."/>
            <person name="Mikhailova N."/>
            <person name="Balakrishnan V."/>
            <person name="Glasner J."/>
            <person name="Perna N.T."/>
        </authorList>
    </citation>
    <scope>NUCLEOTIDE SEQUENCE [LARGE SCALE GENOMIC DNA]</scope>
    <source>
        <strain>PC1</strain>
    </source>
</reference>